<evidence type="ECO:0000255" key="1">
    <source>
        <dbReference type="HAMAP-Rule" id="MF_01362"/>
    </source>
</evidence>
<name>YOHO_SALPA</name>
<feature type="chain" id="PRO_0000252198" description="UPF0387 membrane protein YohO">
    <location>
        <begin position="1"/>
        <end position="35"/>
    </location>
</feature>
<feature type="transmembrane region" description="Helical" evidence="1">
    <location>
        <begin position="6"/>
        <end position="26"/>
    </location>
</feature>
<organism>
    <name type="scientific">Salmonella paratyphi A (strain ATCC 9150 / SARB42)</name>
    <dbReference type="NCBI Taxonomy" id="295319"/>
    <lineage>
        <taxon>Bacteria</taxon>
        <taxon>Pseudomonadati</taxon>
        <taxon>Pseudomonadota</taxon>
        <taxon>Gammaproteobacteria</taxon>
        <taxon>Enterobacterales</taxon>
        <taxon>Enterobacteriaceae</taxon>
        <taxon>Salmonella</taxon>
    </lineage>
</organism>
<proteinExistence type="inferred from homology"/>
<dbReference type="EMBL" id="CP000026">
    <property type="protein sequence ID" value="AAV76688.1"/>
    <property type="molecule type" value="Genomic_DNA"/>
</dbReference>
<dbReference type="RefSeq" id="WP_001261696.1">
    <property type="nucleotide sequence ID" value="NC_006511.1"/>
</dbReference>
<dbReference type="KEGG" id="spt:SPA0690"/>
<dbReference type="HOGENOM" id="CLU_220259_0_0_6"/>
<dbReference type="Proteomes" id="UP000008185">
    <property type="component" value="Chromosome"/>
</dbReference>
<dbReference type="GO" id="GO:0005886">
    <property type="term" value="C:plasma membrane"/>
    <property type="evidence" value="ECO:0007669"/>
    <property type="project" value="UniProtKB-SubCell"/>
</dbReference>
<dbReference type="HAMAP" id="MF_01362">
    <property type="entry name" value="UPF0387"/>
    <property type="match status" value="1"/>
</dbReference>
<dbReference type="InterPro" id="IPR020870">
    <property type="entry name" value="UPF0387_membrane"/>
</dbReference>
<dbReference type="NCBIfam" id="NF010225">
    <property type="entry name" value="PRK13681.1"/>
    <property type="match status" value="1"/>
</dbReference>
<gene>
    <name evidence="1" type="primary">yohO</name>
    <name type="ordered locus">SPA0690</name>
</gene>
<sequence>MRVAKIGVIALFLLMAIGGIGGVMLAGYSFILRAG</sequence>
<protein>
    <recommendedName>
        <fullName evidence="1">UPF0387 membrane protein YohO</fullName>
    </recommendedName>
</protein>
<keyword id="KW-0997">Cell inner membrane</keyword>
<keyword id="KW-1003">Cell membrane</keyword>
<keyword id="KW-0472">Membrane</keyword>
<keyword id="KW-0812">Transmembrane</keyword>
<keyword id="KW-1133">Transmembrane helix</keyword>
<comment type="subcellular location">
    <subcellularLocation>
        <location evidence="1">Cell inner membrane</location>
        <topology evidence="1">Single-pass membrane protein</topology>
    </subcellularLocation>
</comment>
<comment type="similarity">
    <text evidence="1">Belongs to the UPF0387 family.</text>
</comment>
<reference key="1">
    <citation type="journal article" date="2004" name="Nat. Genet.">
        <title>Comparison of genome degradation in Paratyphi A and Typhi, human-restricted serovars of Salmonella enterica that cause typhoid.</title>
        <authorList>
            <person name="McClelland M."/>
            <person name="Sanderson K.E."/>
            <person name="Clifton S.W."/>
            <person name="Latreille P."/>
            <person name="Porwollik S."/>
            <person name="Sabo A."/>
            <person name="Meyer R."/>
            <person name="Bieri T."/>
            <person name="Ozersky P."/>
            <person name="McLellan M."/>
            <person name="Harkins C.R."/>
            <person name="Wang C."/>
            <person name="Nguyen C."/>
            <person name="Berghoff A."/>
            <person name="Elliott G."/>
            <person name="Kohlberg S."/>
            <person name="Strong C."/>
            <person name="Du F."/>
            <person name="Carter J."/>
            <person name="Kremizki C."/>
            <person name="Layman D."/>
            <person name="Leonard S."/>
            <person name="Sun H."/>
            <person name="Fulton L."/>
            <person name="Nash W."/>
            <person name="Miner T."/>
            <person name="Minx P."/>
            <person name="Delehaunty K."/>
            <person name="Fronick C."/>
            <person name="Magrini V."/>
            <person name="Nhan M."/>
            <person name="Warren W."/>
            <person name="Florea L."/>
            <person name="Spieth J."/>
            <person name="Wilson R.K."/>
        </authorList>
    </citation>
    <scope>NUCLEOTIDE SEQUENCE [LARGE SCALE GENOMIC DNA]</scope>
    <source>
        <strain>ATCC 9150 / SARB42</strain>
    </source>
</reference>
<accession>Q5PJ35</accession>